<comment type="function">
    <text evidence="4 5 6">Putative inactive protein kinase which regulates signaling downstream of immune receptors including IL1R and Toll-like receptors (PubMed:12054681, PubMed:12150927, PubMed:29686383). Inhibits dissociation of IRAK1 and IRAK4 from the Toll-like receptor signaling complex by either inhibiting the phosphorylation of IRAK1 and IRAK4 or stabilizing the receptor complex (PubMed:12054681, PubMed:12150927). Upon IL33-induced lung inflammation, positively regulates expression of IL6, CSF3, CXCL2 and CCL5 mRNAs in dendritic cells (PubMed:29686383).</text>
</comment>
<comment type="subunit">
    <text evidence="1 6">Monomer (By similarity). Homodimer (By similarity). May interact with IRAK4 (when phosphorylated) (By similarity). Interacts (when phosphorylated at Thr-110) with PIN1 (via WW domain) in response to IL33-mediated (but not TLR4 ligand LPS) dendritic cell stimulation (PubMed:29686383).</text>
</comment>
<comment type="interaction">
    <interactant intactId="EBI-646179">
        <id>Q8K4B2</id>
    </interactant>
    <interactant intactId="EBI-3842721">
        <id>Q8R4K2</id>
        <label>Irak4</label>
    </interactant>
    <organismsDiffer>false</organismsDiffer>
    <experiments>7</experiments>
</comment>
<comment type="interaction">
    <interactant intactId="EBI-646179">
        <id>Q8K4B2</id>
    </interactant>
    <interactant intactId="EBI-448028">
        <id>P70196</id>
        <label>Traf6</label>
    </interactant>
    <organismsDiffer>false</organismsDiffer>
    <experiments>3</experiments>
</comment>
<comment type="interaction">
    <interactant intactId="EBI-646179">
        <id>Q8K4B2</id>
    </interactant>
    <interactant intactId="EBI-448378">
        <id>Q9NWZ3</id>
        <label>IRAK4</label>
    </interactant>
    <organismsDiffer>true</organismsDiffer>
    <experiments>4</experiments>
</comment>
<comment type="subcellular location">
    <subcellularLocation>
        <location evidence="6">Cytoplasm</location>
    </subcellularLocation>
    <subcellularLocation>
        <location evidence="6">Nucleus</location>
    </subcellularLocation>
    <text evidence="6">In dendritic cells, translocates into the nucleus upon IL33 stimulation.</text>
</comment>
<comment type="tissue specificity">
    <text evidence="4 6">Expressed in inflamed lung macrophages (at protein level) (PubMed:29686383). Expressed in dendritic cells (at protein level) (PubMed:29686383). Highly expressed in liver and thymus and at lower levels in heart, brain, spleen and kidney (PubMed:12054681).</text>
</comment>
<comment type="domain">
    <text evidence="1">The nucleotide binding domain binds ATP with low affinity.</text>
</comment>
<comment type="disruption phenotype">
    <text evidence="6">In response to intranasal administration of IL33, lung inflammation is reduced compared to wild-type and is associated with low infiltration by inflammatory cells, especially granulocytes, a severe reduction in Th2-type cytokine secretion, including Il4, Il5 and Il13 in bronchial alveolar fluids, and reduced up-regulation of Il6, Csf3, Cxcl2 and Ccl5 mRNAs.</text>
</comment>
<comment type="similarity">
    <text evidence="7">Belongs to the protein kinase superfamily. TKL Ser/Thr protein kinase family. Pelle subfamily.</text>
</comment>
<comment type="caution">
    <text evidence="7">Asn-306 is present instead of the conserved Asp which is expected to be an active site residue. Low level autophosphorylation activity has been reported in PubMed:12054681, while other authors describe this as an inactive kinase.</text>
</comment>
<protein>
    <recommendedName>
        <fullName>Interleukin-1 receptor-associated kinase 3</fullName>
        <shortName>IRAK-3</shortName>
    </recommendedName>
    <alternativeName>
        <fullName>IL-1 receptor-associated kinase M</fullName>
        <shortName>IRAK-M</shortName>
    </alternativeName>
    <alternativeName>
        <fullName evidence="7">Inactive IL-1 receptor-associated kinase 3</fullName>
    </alternativeName>
</protein>
<sequence>MAGRCGARGALSPQLLLFDLPPALLGELCGILDSCDGPLGWRGLAERLSNSWLDVRHIEKYVNQGKSGTRELLWSWAQKNKTIGDLLEVLQDMGHQRAIHLIINYGVSWTPSVQTHHELPFPSFPPEVKHACRENDPGPLEPANVTVDNVLVPEHNEKGTLQKTPISFQSILEGTKHFHKDFLIGEGEIFEVYRVDIRNQAYAVKLFKQEKKMQLKKHWKRFLSELEVLLLFRHPHILELAAYFTETEKLCLVYPYMSNGTLFDRLQCTNGTTPLSWHVRISVLIGIAKAIQYLHNTQPCAVICGNVSSANILLDDQLQPKLTDFAAAHFRPNLEQQSSTINMTGGGRKHLWYMPEEYIRQGRLSVKTDVYSFGIVIMEVLTGCKVVLDDPKHVQLRDLLMELMEKRGLDSCLSFLDRKIPPCPRNFSAKLFSLAGRCVATKAKLRPTMDEVLSSLESTQPSLYFAEDPPTSLKSFRCPSPLFLDNVPSIPVEDDENQNNHSVPPKEVLGTDRVTQKTPFECSQSEVTFLGLDRNRGNRGSEADCNVPSSSHEECWSPELVAPSQDLSPTVISLGSSWEVPGHSYGSKPMEKRCSSGLFCSEHEQSKKQ</sequence>
<dbReference type="EMBL" id="AF461763">
    <property type="protein sequence ID" value="AAM83393.1"/>
    <property type="molecule type" value="mRNA"/>
</dbReference>
<dbReference type="EMBL" id="AJ440757">
    <property type="protein sequence ID" value="CAD29448.2"/>
    <property type="molecule type" value="mRNA"/>
</dbReference>
<dbReference type="EMBL" id="AK029057">
    <property type="protein sequence ID" value="BAC26270.1"/>
    <property type="molecule type" value="mRNA"/>
</dbReference>
<dbReference type="EMBL" id="AK049210">
    <property type="protein sequence ID" value="BAC33612.1"/>
    <property type="molecule type" value="mRNA"/>
</dbReference>
<dbReference type="CCDS" id="CCDS24204.1"/>
<dbReference type="RefSeq" id="NP_082955.2">
    <property type="nucleotide sequence ID" value="NM_028679.3"/>
</dbReference>
<dbReference type="SMR" id="Q8K4B2"/>
<dbReference type="BioGRID" id="216351">
    <property type="interactions" value="4"/>
</dbReference>
<dbReference type="FunCoup" id="Q8K4B2">
    <property type="interactions" value="619"/>
</dbReference>
<dbReference type="IntAct" id="Q8K4B2">
    <property type="interactions" value="19"/>
</dbReference>
<dbReference type="MINT" id="Q8K4B2"/>
<dbReference type="STRING" id="10090.ENSMUSP00000020448"/>
<dbReference type="iPTMnet" id="Q8K4B2"/>
<dbReference type="PhosphoSitePlus" id="Q8K4B2"/>
<dbReference type="jPOST" id="Q8K4B2"/>
<dbReference type="PaxDb" id="10090-ENSMUSP00000020448"/>
<dbReference type="ProteomicsDB" id="267005"/>
<dbReference type="Antibodypedia" id="16652">
    <property type="antibodies" value="583 antibodies from 44 providers"/>
</dbReference>
<dbReference type="DNASU" id="73914"/>
<dbReference type="Ensembl" id="ENSMUST00000020448.11">
    <property type="protein sequence ID" value="ENSMUSP00000020448.5"/>
    <property type="gene ID" value="ENSMUSG00000020227.11"/>
</dbReference>
<dbReference type="GeneID" id="73914"/>
<dbReference type="KEGG" id="mmu:73914"/>
<dbReference type="UCSC" id="uc007het.1">
    <property type="organism name" value="mouse"/>
</dbReference>
<dbReference type="AGR" id="MGI:1921164"/>
<dbReference type="CTD" id="11213"/>
<dbReference type="MGI" id="MGI:1921164">
    <property type="gene designation" value="Irak3"/>
</dbReference>
<dbReference type="VEuPathDB" id="HostDB:ENSMUSG00000020227"/>
<dbReference type="eggNOG" id="KOG1187">
    <property type="taxonomic scope" value="Eukaryota"/>
</dbReference>
<dbReference type="GeneTree" id="ENSGT00940000161222"/>
<dbReference type="HOGENOM" id="CLU_029530_0_0_1"/>
<dbReference type="InParanoid" id="Q8K4B2"/>
<dbReference type="OMA" id="YVEQGKS"/>
<dbReference type="OrthoDB" id="4062651at2759"/>
<dbReference type="PhylomeDB" id="Q8K4B2"/>
<dbReference type="TreeFam" id="TF328924"/>
<dbReference type="Reactome" id="R-MMU-9020702">
    <property type="pathway name" value="Interleukin-1 signaling"/>
</dbReference>
<dbReference type="BioGRID-ORCS" id="73914">
    <property type="hits" value="4 hits in 78 CRISPR screens"/>
</dbReference>
<dbReference type="ChiTaRS" id="Irak3">
    <property type="organism name" value="mouse"/>
</dbReference>
<dbReference type="PRO" id="PR:Q8K4B2"/>
<dbReference type="Proteomes" id="UP000000589">
    <property type="component" value="Chromosome 10"/>
</dbReference>
<dbReference type="RNAct" id="Q8K4B2">
    <property type="molecule type" value="protein"/>
</dbReference>
<dbReference type="Bgee" id="ENSMUSG00000020227">
    <property type="expression patterns" value="Expressed in granulocyte and 92 other cell types or tissues"/>
</dbReference>
<dbReference type="ExpressionAtlas" id="Q8K4B2">
    <property type="expression patterns" value="baseline and differential"/>
</dbReference>
<dbReference type="GO" id="GO:0005737">
    <property type="term" value="C:cytoplasm"/>
    <property type="evidence" value="ECO:0000314"/>
    <property type="project" value="UniProtKB"/>
</dbReference>
<dbReference type="GO" id="GO:0005634">
    <property type="term" value="C:nucleus"/>
    <property type="evidence" value="ECO:0000314"/>
    <property type="project" value="UniProtKB"/>
</dbReference>
<dbReference type="GO" id="GO:0005524">
    <property type="term" value="F:ATP binding"/>
    <property type="evidence" value="ECO:0000314"/>
    <property type="project" value="UniProtKB"/>
</dbReference>
<dbReference type="GO" id="GO:0000287">
    <property type="term" value="F:magnesium ion binding"/>
    <property type="evidence" value="ECO:0000314"/>
    <property type="project" value="UniProtKB"/>
</dbReference>
<dbReference type="GO" id="GO:0046982">
    <property type="term" value="F:protein heterodimerization activity"/>
    <property type="evidence" value="ECO:0007669"/>
    <property type="project" value="Ensembl"/>
</dbReference>
<dbReference type="GO" id="GO:0042803">
    <property type="term" value="F:protein homodimerization activity"/>
    <property type="evidence" value="ECO:0000250"/>
    <property type="project" value="UniProtKB"/>
</dbReference>
<dbReference type="GO" id="GO:0004672">
    <property type="term" value="F:protein kinase activity"/>
    <property type="evidence" value="ECO:0000314"/>
    <property type="project" value="MGI"/>
</dbReference>
<dbReference type="GO" id="GO:0019901">
    <property type="term" value="F:protein kinase binding"/>
    <property type="evidence" value="ECO:0007669"/>
    <property type="project" value="Ensembl"/>
</dbReference>
<dbReference type="GO" id="GO:0004674">
    <property type="term" value="F:protein serine/threonine kinase activity"/>
    <property type="evidence" value="ECO:0000314"/>
    <property type="project" value="UniProtKB"/>
</dbReference>
<dbReference type="GO" id="GO:0019221">
    <property type="term" value="P:cytokine-mediated signaling pathway"/>
    <property type="evidence" value="ECO:0000314"/>
    <property type="project" value="UniProtKB"/>
</dbReference>
<dbReference type="GO" id="GO:0070498">
    <property type="term" value="P:interleukin-1-mediated signaling pathway"/>
    <property type="evidence" value="ECO:0000314"/>
    <property type="project" value="MGI"/>
</dbReference>
<dbReference type="GO" id="GO:0043124">
    <property type="term" value="P:negative regulation of canonical NF-kappaB signal transduction"/>
    <property type="evidence" value="ECO:0007669"/>
    <property type="project" value="Ensembl"/>
</dbReference>
<dbReference type="GO" id="GO:0001960">
    <property type="term" value="P:negative regulation of cytokine-mediated signaling pathway"/>
    <property type="evidence" value="ECO:0000305"/>
    <property type="project" value="BHF-UCL"/>
</dbReference>
<dbReference type="GO" id="GO:0045824">
    <property type="term" value="P:negative regulation of innate immune response"/>
    <property type="evidence" value="ECO:0000315"/>
    <property type="project" value="BHF-UCL"/>
</dbReference>
<dbReference type="GO" id="GO:0032695">
    <property type="term" value="P:negative regulation of interleukin-12 production"/>
    <property type="evidence" value="ECO:0000315"/>
    <property type="project" value="BHF-UCL"/>
</dbReference>
<dbReference type="GO" id="GO:0032715">
    <property type="term" value="P:negative regulation of interleukin-6 production"/>
    <property type="evidence" value="ECO:0000315"/>
    <property type="project" value="BHF-UCL"/>
</dbReference>
<dbReference type="GO" id="GO:0010936">
    <property type="term" value="P:negative regulation of macrophage cytokine production"/>
    <property type="evidence" value="ECO:0000315"/>
    <property type="project" value="BHF-UCL"/>
</dbReference>
<dbReference type="GO" id="GO:0043409">
    <property type="term" value="P:negative regulation of MAPK cascade"/>
    <property type="evidence" value="ECO:0000315"/>
    <property type="project" value="BHF-UCL"/>
</dbReference>
<dbReference type="GO" id="GO:0042177">
    <property type="term" value="P:negative regulation of protein catabolic process"/>
    <property type="evidence" value="ECO:0000315"/>
    <property type="project" value="BHF-UCL"/>
</dbReference>
<dbReference type="GO" id="GO:0043242">
    <property type="term" value="P:negative regulation of protein-containing complex disassembly"/>
    <property type="evidence" value="ECO:0007669"/>
    <property type="project" value="Ensembl"/>
</dbReference>
<dbReference type="GO" id="GO:0034122">
    <property type="term" value="P:negative regulation of toll-like receptor signaling pathway"/>
    <property type="evidence" value="ECO:0000315"/>
    <property type="project" value="BHF-UCL"/>
</dbReference>
<dbReference type="GO" id="GO:0032720">
    <property type="term" value="P:negative regulation of tumor necrosis factor production"/>
    <property type="evidence" value="ECO:0000315"/>
    <property type="project" value="BHF-UCL"/>
</dbReference>
<dbReference type="GO" id="GO:0001819">
    <property type="term" value="P:positive regulation of cytokine production"/>
    <property type="evidence" value="ECO:0000315"/>
    <property type="project" value="UniProtKB"/>
</dbReference>
<dbReference type="GO" id="GO:0010933">
    <property type="term" value="P:positive regulation of macrophage tolerance induction"/>
    <property type="evidence" value="ECO:0000315"/>
    <property type="project" value="BHF-UCL"/>
</dbReference>
<dbReference type="GO" id="GO:0006468">
    <property type="term" value="P:protein phosphorylation"/>
    <property type="evidence" value="ECO:0000314"/>
    <property type="project" value="UniProtKB"/>
</dbReference>
<dbReference type="GO" id="GO:0043244">
    <property type="term" value="P:regulation of protein-containing complex disassembly"/>
    <property type="evidence" value="ECO:0000314"/>
    <property type="project" value="UniProtKB"/>
</dbReference>
<dbReference type="GO" id="GO:0043330">
    <property type="term" value="P:response to exogenous dsRNA"/>
    <property type="evidence" value="ECO:0000315"/>
    <property type="project" value="BHF-UCL"/>
</dbReference>
<dbReference type="GO" id="GO:0032496">
    <property type="term" value="P:response to lipopolysaccharide"/>
    <property type="evidence" value="ECO:0000315"/>
    <property type="project" value="BHF-UCL"/>
</dbReference>
<dbReference type="GO" id="GO:0032494">
    <property type="term" value="P:response to peptidoglycan"/>
    <property type="evidence" value="ECO:0000315"/>
    <property type="project" value="BHF-UCL"/>
</dbReference>
<dbReference type="GO" id="GO:0009615">
    <property type="term" value="P:response to virus"/>
    <property type="evidence" value="ECO:0000305"/>
    <property type="project" value="BHF-UCL"/>
</dbReference>
<dbReference type="CDD" id="cd08796">
    <property type="entry name" value="Death_IRAK-M"/>
    <property type="match status" value="1"/>
</dbReference>
<dbReference type="CDD" id="cd14160">
    <property type="entry name" value="PK_IRAK3"/>
    <property type="match status" value="1"/>
</dbReference>
<dbReference type="FunFam" id="1.10.510.10:FF:000461">
    <property type="entry name" value="Interleukin 1 receptor associated kinase 3"/>
    <property type="match status" value="1"/>
</dbReference>
<dbReference type="FunFam" id="3.30.200.20:FF:000364">
    <property type="entry name" value="Interleukin 1 receptor associated kinase 3"/>
    <property type="match status" value="1"/>
</dbReference>
<dbReference type="FunFam" id="1.10.533.10:FF:000055">
    <property type="entry name" value="Interleukin-1 receptor-associated kinase 3"/>
    <property type="match status" value="1"/>
</dbReference>
<dbReference type="Gene3D" id="1.10.533.10">
    <property type="entry name" value="Death Domain, Fas"/>
    <property type="match status" value="1"/>
</dbReference>
<dbReference type="Gene3D" id="3.30.200.20">
    <property type="entry name" value="Phosphorylase Kinase, domain 1"/>
    <property type="match status" value="1"/>
</dbReference>
<dbReference type="Gene3D" id="1.10.510.10">
    <property type="entry name" value="Transferase(Phosphotransferase) domain 1"/>
    <property type="match status" value="1"/>
</dbReference>
<dbReference type="InterPro" id="IPR011029">
    <property type="entry name" value="DEATH-like_dom_sf"/>
</dbReference>
<dbReference type="InterPro" id="IPR000488">
    <property type="entry name" value="Death_dom"/>
</dbReference>
<dbReference type="InterPro" id="IPR042747">
    <property type="entry name" value="IRAK3_death"/>
</dbReference>
<dbReference type="InterPro" id="IPR042698">
    <property type="entry name" value="IRAK3_PK"/>
</dbReference>
<dbReference type="InterPro" id="IPR011009">
    <property type="entry name" value="Kinase-like_dom_sf"/>
</dbReference>
<dbReference type="InterPro" id="IPR000719">
    <property type="entry name" value="Prot_kinase_dom"/>
</dbReference>
<dbReference type="PANTHER" id="PTHR27001:SF929">
    <property type="entry name" value="INTERLEUKIN 1 RECEPTOR-ASSOCIATED KINASE 1"/>
    <property type="match status" value="1"/>
</dbReference>
<dbReference type="PANTHER" id="PTHR27001">
    <property type="entry name" value="OS01G0253100 PROTEIN"/>
    <property type="match status" value="1"/>
</dbReference>
<dbReference type="Pfam" id="PF00531">
    <property type="entry name" value="Death"/>
    <property type="match status" value="1"/>
</dbReference>
<dbReference type="Pfam" id="PF00069">
    <property type="entry name" value="Pkinase"/>
    <property type="match status" value="1"/>
</dbReference>
<dbReference type="SMART" id="SM00005">
    <property type="entry name" value="DEATH"/>
    <property type="match status" value="1"/>
</dbReference>
<dbReference type="SUPFAM" id="SSF47986">
    <property type="entry name" value="DEATH domain"/>
    <property type="match status" value="1"/>
</dbReference>
<dbReference type="SUPFAM" id="SSF56112">
    <property type="entry name" value="Protein kinase-like (PK-like)"/>
    <property type="match status" value="1"/>
</dbReference>
<dbReference type="PROSITE" id="PS50017">
    <property type="entry name" value="DEATH_DOMAIN"/>
    <property type="match status" value="1"/>
</dbReference>
<dbReference type="PROSITE" id="PS50011">
    <property type="entry name" value="PROTEIN_KINASE_DOM"/>
    <property type="match status" value="1"/>
</dbReference>
<accession>Q8K4B2</accession>
<accession>Q8C7U8</accession>
<accession>Q8CE40</accession>
<accession>Q8K1S8</accession>
<proteinExistence type="evidence at protein level"/>
<feature type="chain" id="PRO_0000086034" description="Interleukin-1 receptor-associated kinase 3">
    <location>
        <begin position="1"/>
        <end position="609"/>
    </location>
</feature>
<feature type="domain" description="Death" evidence="2">
    <location>
        <begin position="41"/>
        <end position="106"/>
    </location>
</feature>
<feature type="domain" description="Protein kinase" evidence="3">
    <location>
        <begin position="178"/>
        <end position="463"/>
    </location>
</feature>
<feature type="binding site" evidence="3">
    <location>
        <begin position="184"/>
        <end position="192"/>
    </location>
    <ligand>
        <name>ATP</name>
        <dbReference type="ChEBI" id="CHEBI:30616"/>
    </ligand>
</feature>
<feature type="binding site" evidence="3">
    <location>
        <position position="205"/>
    </location>
    <ligand>
        <name>ATP</name>
        <dbReference type="ChEBI" id="CHEBI:30616"/>
    </ligand>
</feature>
<feature type="binding site" evidence="3">
    <location>
        <begin position="308"/>
        <end position="311"/>
    </location>
    <ligand>
        <name>ATP</name>
        <dbReference type="ChEBI" id="CHEBI:30616"/>
    </ligand>
</feature>
<feature type="binding site" evidence="3">
    <location>
        <position position="324"/>
    </location>
    <ligand>
        <name>ATP</name>
        <dbReference type="ChEBI" id="CHEBI:30616"/>
    </ligand>
</feature>
<feature type="site" description="Cis/trans isomerization of proline peptide bond; by PIN1; dependent on Thr-110 phosphorylation" evidence="1">
    <location>
        <begin position="110"/>
        <end position="111"/>
    </location>
</feature>
<feature type="modified residue" description="Phosphothreonine" evidence="1">
    <location>
        <position position="110"/>
    </location>
</feature>
<feature type="modified residue" description="Phosphoserine" evidence="1">
    <location>
        <position position="480"/>
    </location>
</feature>
<feature type="sequence conflict" description="In Ref. 1; AAM83393." evidence="7" ref="1">
    <original>C</original>
    <variation>W</variation>
    <location>
        <position position="35"/>
    </location>
</feature>
<feature type="sequence conflict" description="In Ref. 1; AAM83393." evidence="7" ref="1">
    <original>R</original>
    <variation>W</variation>
    <location>
        <position position="42"/>
    </location>
</feature>
<feature type="sequence conflict" description="In Ref. 1; AAM83393." evidence="7" ref="1">
    <original>V</original>
    <variation>L</variation>
    <location>
        <position position="62"/>
    </location>
</feature>
<feature type="sequence conflict" description="In Ref. 1; AAM83393." evidence="7" ref="1">
    <original>P</original>
    <variation>L</variation>
    <location>
        <position position="126"/>
    </location>
</feature>
<feature type="sequence conflict" description="In Ref. 1; AAM83393." evidence="7" ref="1">
    <original>V</original>
    <variation>M</variation>
    <location>
        <position position="147"/>
    </location>
</feature>
<feature type="sequence conflict" description="In Ref. 3; BAC33612." evidence="7" ref="3">
    <original>S</original>
    <variation>G</variation>
    <location>
        <position position="282"/>
    </location>
</feature>
<feature type="sequence conflict" description="In Ref. 1; AAM83393." evidence="7" ref="1">
    <original>S</original>
    <variation>N</variation>
    <location>
        <position position="282"/>
    </location>
</feature>
<organism>
    <name type="scientific">Mus musculus</name>
    <name type="common">Mouse</name>
    <dbReference type="NCBI Taxonomy" id="10090"/>
    <lineage>
        <taxon>Eukaryota</taxon>
        <taxon>Metazoa</taxon>
        <taxon>Chordata</taxon>
        <taxon>Craniata</taxon>
        <taxon>Vertebrata</taxon>
        <taxon>Euteleostomi</taxon>
        <taxon>Mammalia</taxon>
        <taxon>Eutheria</taxon>
        <taxon>Euarchontoglires</taxon>
        <taxon>Glires</taxon>
        <taxon>Rodentia</taxon>
        <taxon>Myomorpha</taxon>
        <taxon>Muroidea</taxon>
        <taxon>Muridae</taxon>
        <taxon>Murinae</taxon>
        <taxon>Mus</taxon>
        <taxon>Mus</taxon>
    </lineage>
</organism>
<keyword id="KW-0067">ATP-binding</keyword>
<keyword id="KW-0963">Cytoplasm</keyword>
<keyword id="KW-0547">Nucleotide-binding</keyword>
<keyword id="KW-0539">Nucleus</keyword>
<keyword id="KW-0597">Phosphoprotein</keyword>
<keyword id="KW-1185">Reference proteome</keyword>
<reference evidence="7 8" key="1">
    <citation type="journal article" date="2002" name="Cell">
        <title>IRAK-M is a negative regulator of Toll-like receptor signaling.</title>
        <authorList>
            <person name="Kobayashi K."/>
            <person name="Hernandez L.D."/>
            <person name="Galan J.E."/>
            <person name="Janeway C.A. Jr."/>
            <person name="Medzhitov R."/>
            <person name="Flavell R.A."/>
        </authorList>
    </citation>
    <scope>NUCLEOTIDE SEQUENCE [MRNA]</scope>
    <scope>FUNCTION</scope>
    <source>
        <strain evidence="8">C57BL/6J</strain>
        <tissue evidence="5">Macrophage</tissue>
    </source>
</reference>
<reference evidence="7 9" key="2">
    <citation type="journal article" date="2002" name="Biochem. Biophys. Res. Commun.">
        <title>Identification and characterization of murine IRAK-M.</title>
        <authorList>
            <person name="Rosati O."/>
            <person name="Martin M.U."/>
        </authorList>
    </citation>
    <scope>NUCLEOTIDE SEQUENCE [MRNA]</scope>
    <scope>FUNCTION</scope>
    <scope>TISSUE SPECIFICITY</scope>
    <source>
        <strain evidence="9">BALB/cJ</strain>
        <tissue evidence="4">Macrophage</tissue>
    </source>
</reference>
<reference key="3">
    <citation type="journal article" date="2005" name="Science">
        <title>The transcriptional landscape of the mammalian genome.</title>
        <authorList>
            <person name="Carninci P."/>
            <person name="Kasukawa T."/>
            <person name="Katayama S."/>
            <person name="Gough J."/>
            <person name="Frith M.C."/>
            <person name="Maeda N."/>
            <person name="Oyama R."/>
            <person name="Ravasi T."/>
            <person name="Lenhard B."/>
            <person name="Wells C."/>
            <person name="Kodzius R."/>
            <person name="Shimokawa K."/>
            <person name="Bajic V.B."/>
            <person name="Brenner S.E."/>
            <person name="Batalov S."/>
            <person name="Forrest A.R."/>
            <person name="Zavolan M."/>
            <person name="Davis M.J."/>
            <person name="Wilming L.G."/>
            <person name="Aidinis V."/>
            <person name="Allen J.E."/>
            <person name="Ambesi-Impiombato A."/>
            <person name="Apweiler R."/>
            <person name="Aturaliya R.N."/>
            <person name="Bailey T.L."/>
            <person name="Bansal M."/>
            <person name="Baxter L."/>
            <person name="Beisel K.W."/>
            <person name="Bersano T."/>
            <person name="Bono H."/>
            <person name="Chalk A.M."/>
            <person name="Chiu K.P."/>
            <person name="Choudhary V."/>
            <person name="Christoffels A."/>
            <person name="Clutterbuck D.R."/>
            <person name="Crowe M.L."/>
            <person name="Dalla E."/>
            <person name="Dalrymple B.P."/>
            <person name="de Bono B."/>
            <person name="Della Gatta G."/>
            <person name="di Bernardo D."/>
            <person name="Down T."/>
            <person name="Engstrom P."/>
            <person name="Fagiolini M."/>
            <person name="Faulkner G."/>
            <person name="Fletcher C.F."/>
            <person name="Fukushima T."/>
            <person name="Furuno M."/>
            <person name="Futaki S."/>
            <person name="Gariboldi M."/>
            <person name="Georgii-Hemming P."/>
            <person name="Gingeras T.R."/>
            <person name="Gojobori T."/>
            <person name="Green R.E."/>
            <person name="Gustincich S."/>
            <person name="Harbers M."/>
            <person name="Hayashi Y."/>
            <person name="Hensch T.K."/>
            <person name="Hirokawa N."/>
            <person name="Hill D."/>
            <person name="Huminiecki L."/>
            <person name="Iacono M."/>
            <person name="Ikeo K."/>
            <person name="Iwama A."/>
            <person name="Ishikawa T."/>
            <person name="Jakt M."/>
            <person name="Kanapin A."/>
            <person name="Katoh M."/>
            <person name="Kawasawa Y."/>
            <person name="Kelso J."/>
            <person name="Kitamura H."/>
            <person name="Kitano H."/>
            <person name="Kollias G."/>
            <person name="Krishnan S.P."/>
            <person name="Kruger A."/>
            <person name="Kummerfeld S.K."/>
            <person name="Kurochkin I.V."/>
            <person name="Lareau L.F."/>
            <person name="Lazarevic D."/>
            <person name="Lipovich L."/>
            <person name="Liu J."/>
            <person name="Liuni S."/>
            <person name="McWilliam S."/>
            <person name="Madan Babu M."/>
            <person name="Madera M."/>
            <person name="Marchionni L."/>
            <person name="Matsuda H."/>
            <person name="Matsuzawa S."/>
            <person name="Miki H."/>
            <person name="Mignone F."/>
            <person name="Miyake S."/>
            <person name="Morris K."/>
            <person name="Mottagui-Tabar S."/>
            <person name="Mulder N."/>
            <person name="Nakano N."/>
            <person name="Nakauchi H."/>
            <person name="Ng P."/>
            <person name="Nilsson R."/>
            <person name="Nishiguchi S."/>
            <person name="Nishikawa S."/>
            <person name="Nori F."/>
            <person name="Ohara O."/>
            <person name="Okazaki Y."/>
            <person name="Orlando V."/>
            <person name="Pang K.C."/>
            <person name="Pavan W.J."/>
            <person name="Pavesi G."/>
            <person name="Pesole G."/>
            <person name="Petrovsky N."/>
            <person name="Piazza S."/>
            <person name="Reed J."/>
            <person name="Reid J.F."/>
            <person name="Ring B.Z."/>
            <person name="Ringwald M."/>
            <person name="Rost B."/>
            <person name="Ruan Y."/>
            <person name="Salzberg S.L."/>
            <person name="Sandelin A."/>
            <person name="Schneider C."/>
            <person name="Schoenbach C."/>
            <person name="Sekiguchi K."/>
            <person name="Semple C.A."/>
            <person name="Seno S."/>
            <person name="Sessa L."/>
            <person name="Sheng Y."/>
            <person name="Shibata Y."/>
            <person name="Shimada H."/>
            <person name="Shimada K."/>
            <person name="Silva D."/>
            <person name="Sinclair B."/>
            <person name="Sperling S."/>
            <person name="Stupka E."/>
            <person name="Sugiura K."/>
            <person name="Sultana R."/>
            <person name="Takenaka Y."/>
            <person name="Taki K."/>
            <person name="Tammoja K."/>
            <person name="Tan S.L."/>
            <person name="Tang S."/>
            <person name="Taylor M.S."/>
            <person name="Tegner J."/>
            <person name="Teichmann S.A."/>
            <person name="Ueda H.R."/>
            <person name="van Nimwegen E."/>
            <person name="Verardo R."/>
            <person name="Wei C.L."/>
            <person name="Yagi K."/>
            <person name="Yamanishi H."/>
            <person name="Zabarovsky E."/>
            <person name="Zhu S."/>
            <person name="Zimmer A."/>
            <person name="Hide W."/>
            <person name="Bult C."/>
            <person name="Grimmond S.M."/>
            <person name="Teasdale R.D."/>
            <person name="Liu E.T."/>
            <person name="Brusic V."/>
            <person name="Quackenbush J."/>
            <person name="Wahlestedt C."/>
            <person name="Mattick J.S."/>
            <person name="Hume D.A."/>
            <person name="Kai C."/>
            <person name="Sasaki D."/>
            <person name="Tomaru Y."/>
            <person name="Fukuda S."/>
            <person name="Kanamori-Katayama M."/>
            <person name="Suzuki M."/>
            <person name="Aoki J."/>
            <person name="Arakawa T."/>
            <person name="Iida J."/>
            <person name="Imamura K."/>
            <person name="Itoh M."/>
            <person name="Kato T."/>
            <person name="Kawaji H."/>
            <person name="Kawagashira N."/>
            <person name="Kawashima T."/>
            <person name="Kojima M."/>
            <person name="Kondo S."/>
            <person name="Konno H."/>
            <person name="Nakano K."/>
            <person name="Ninomiya N."/>
            <person name="Nishio T."/>
            <person name="Okada M."/>
            <person name="Plessy C."/>
            <person name="Shibata K."/>
            <person name="Shiraki T."/>
            <person name="Suzuki S."/>
            <person name="Tagami M."/>
            <person name="Waki K."/>
            <person name="Watahiki A."/>
            <person name="Okamura-Oho Y."/>
            <person name="Suzuki H."/>
            <person name="Kawai J."/>
            <person name="Hayashizaki Y."/>
        </authorList>
    </citation>
    <scope>NUCLEOTIDE SEQUENCE [LARGE SCALE MRNA]</scope>
    <source>
        <strain>C57BL/6J</strain>
        <tissue>Skin</tissue>
    </source>
</reference>
<reference key="4">
    <citation type="journal article" date="2018" name="Nat. Commun.">
        <title>The IL-33-PIN1-IRAK-M axis is critical for type 2 immunity in IL-33-induced allergic airway inflammation.</title>
        <authorList>
            <person name="Nechama M."/>
            <person name="Kwon J."/>
            <person name="Wei S."/>
            <person name="Kyi A.T."/>
            <person name="Welner R.S."/>
            <person name="Ben-Dov I.Z."/>
            <person name="Arredouani M.S."/>
            <person name="Asara J.M."/>
            <person name="Chen C.H."/>
            <person name="Tsai C.Y."/>
            <person name="Nelson K.F."/>
            <person name="Kobayashi K.S."/>
            <person name="Israel E."/>
            <person name="Zhou X.Z."/>
            <person name="Nicholson L.K."/>
            <person name="Lu K.P."/>
        </authorList>
    </citation>
    <scope>FUNCTION</scope>
    <scope>INTERACTION WITH PIN1</scope>
    <scope>SUBCELLULAR LOCATION</scope>
    <scope>TISSUE SPECIFICITY</scope>
    <scope>DISRUPTION PHENOTYPE</scope>
</reference>
<name>IRAK3_MOUSE</name>
<gene>
    <name evidence="10" type="primary">Irak3</name>
</gene>
<evidence type="ECO:0000250" key="1">
    <source>
        <dbReference type="UniProtKB" id="Q9Y616"/>
    </source>
</evidence>
<evidence type="ECO:0000255" key="2">
    <source>
        <dbReference type="PROSITE-ProRule" id="PRU00064"/>
    </source>
</evidence>
<evidence type="ECO:0000255" key="3">
    <source>
        <dbReference type="PROSITE-ProRule" id="PRU00159"/>
    </source>
</evidence>
<evidence type="ECO:0000269" key="4">
    <source>
    </source>
</evidence>
<evidence type="ECO:0000269" key="5">
    <source>
    </source>
</evidence>
<evidence type="ECO:0000269" key="6">
    <source>
    </source>
</evidence>
<evidence type="ECO:0000305" key="7"/>
<evidence type="ECO:0000312" key="8">
    <source>
        <dbReference type="EMBL" id="AAM83393.1"/>
    </source>
</evidence>
<evidence type="ECO:0000312" key="9">
    <source>
        <dbReference type="EMBL" id="CAD29448.2"/>
    </source>
</evidence>
<evidence type="ECO:0000312" key="10">
    <source>
        <dbReference type="MGI" id="MGI:1921164"/>
    </source>
</evidence>